<sequence length="143" mass="14791">MELNGIKPADGAKHYKRRVGRGIGSGIGKTAGRGHKGQKSRAGGYHKVGFEGGQMPMQRRLPKRGFKSQLLKFNAEVTLSALEQLGASEVDLVTLKQAGLVGELAKVVKVIMTGKISKAVKLTGIGATAAAKVAIEAAGGSLA</sequence>
<feature type="chain" id="PRO_0000251550" description="Large ribosomal subunit protein uL15">
    <location>
        <begin position="1"/>
        <end position="143"/>
    </location>
</feature>
<feature type="region of interest" description="Disordered" evidence="2">
    <location>
        <begin position="1"/>
        <end position="59"/>
    </location>
</feature>
<feature type="compositionally biased region" description="Gly residues" evidence="2">
    <location>
        <begin position="21"/>
        <end position="31"/>
    </location>
</feature>
<reference key="1">
    <citation type="submission" date="2006-02" db="EMBL/GenBank/DDBJ databases">
        <title>Complete sequence of chromosome of Rhodoferax ferrireducens DSM 15236.</title>
        <authorList>
            <person name="Copeland A."/>
            <person name="Lucas S."/>
            <person name="Lapidus A."/>
            <person name="Barry K."/>
            <person name="Detter J.C."/>
            <person name="Glavina del Rio T."/>
            <person name="Hammon N."/>
            <person name="Israni S."/>
            <person name="Pitluck S."/>
            <person name="Brettin T."/>
            <person name="Bruce D."/>
            <person name="Han C."/>
            <person name="Tapia R."/>
            <person name="Gilna P."/>
            <person name="Kiss H."/>
            <person name="Schmutz J."/>
            <person name="Larimer F."/>
            <person name="Land M."/>
            <person name="Kyrpides N."/>
            <person name="Ivanova N."/>
            <person name="Richardson P."/>
        </authorList>
    </citation>
    <scope>NUCLEOTIDE SEQUENCE [LARGE SCALE GENOMIC DNA]</scope>
    <source>
        <strain>ATCC BAA-621 / DSM 15236 / T118</strain>
    </source>
</reference>
<dbReference type="EMBL" id="CP000267">
    <property type="protein sequence ID" value="ABD71911.1"/>
    <property type="molecule type" value="Genomic_DNA"/>
</dbReference>
<dbReference type="RefSeq" id="WP_011466468.1">
    <property type="nucleotide sequence ID" value="NC_007908.1"/>
</dbReference>
<dbReference type="SMR" id="Q21QP2"/>
<dbReference type="STRING" id="338969.Rfer_4224"/>
<dbReference type="KEGG" id="rfr:Rfer_4224"/>
<dbReference type="eggNOG" id="COG0200">
    <property type="taxonomic scope" value="Bacteria"/>
</dbReference>
<dbReference type="HOGENOM" id="CLU_055188_4_2_4"/>
<dbReference type="OrthoDB" id="9810293at2"/>
<dbReference type="Proteomes" id="UP000008332">
    <property type="component" value="Chromosome"/>
</dbReference>
<dbReference type="GO" id="GO:0022625">
    <property type="term" value="C:cytosolic large ribosomal subunit"/>
    <property type="evidence" value="ECO:0007669"/>
    <property type="project" value="TreeGrafter"/>
</dbReference>
<dbReference type="GO" id="GO:0019843">
    <property type="term" value="F:rRNA binding"/>
    <property type="evidence" value="ECO:0007669"/>
    <property type="project" value="UniProtKB-UniRule"/>
</dbReference>
<dbReference type="GO" id="GO:0003735">
    <property type="term" value="F:structural constituent of ribosome"/>
    <property type="evidence" value="ECO:0007669"/>
    <property type="project" value="InterPro"/>
</dbReference>
<dbReference type="GO" id="GO:0006412">
    <property type="term" value="P:translation"/>
    <property type="evidence" value="ECO:0007669"/>
    <property type="project" value="UniProtKB-UniRule"/>
</dbReference>
<dbReference type="Gene3D" id="3.100.10.10">
    <property type="match status" value="1"/>
</dbReference>
<dbReference type="HAMAP" id="MF_01341">
    <property type="entry name" value="Ribosomal_uL15"/>
    <property type="match status" value="1"/>
</dbReference>
<dbReference type="InterPro" id="IPR030878">
    <property type="entry name" value="Ribosomal_uL15"/>
</dbReference>
<dbReference type="InterPro" id="IPR021131">
    <property type="entry name" value="Ribosomal_uL15/eL18"/>
</dbReference>
<dbReference type="InterPro" id="IPR036227">
    <property type="entry name" value="Ribosomal_uL15/eL18_sf"/>
</dbReference>
<dbReference type="InterPro" id="IPR005749">
    <property type="entry name" value="Ribosomal_uL15_bac-type"/>
</dbReference>
<dbReference type="NCBIfam" id="TIGR01071">
    <property type="entry name" value="rplO_bact"/>
    <property type="match status" value="1"/>
</dbReference>
<dbReference type="PANTHER" id="PTHR12934">
    <property type="entry name" value="50S RIBOSOMAL PROTEIN L15"/>
    <property type="match status" value="1"/>
</dbReference>
<dbReference type="PANTHER" id="PTHR12934:SF11">
    <property type="entry name" value="LARGE RIBOSOMAL SUBUNIT PROTEIN UL15M"/>
    <property type="match status" value="1"/>
</dbReference>
<dbReference type="Pfam" id="PF00828">
    <property type="entry name" value="Ribosomal_L27A"/>
    <property type="match status" value="1"/>
</dbReference>
<dbReference type="SUPFAM" id="SSF52080">
    <property type="entry name" value="Ribosomal proteins L15p and L18e"/>
    <property type="match status" value="1"/>
</dbReference>
<organism>
    <name type="scientific">Albidiferax ferrireducens (strain ATCC BAA-621 / DSM 15236 / T118)</name>
    <name type="common">Rhodoferax ferrireducens</name>
    <dbReference type="NCBI Taxonomy" id="338969"/>
    <lineage>
        <taxon>Bacteria</taxon>
        <taxon>Pseudomonadati</taxon>
        <taxon>Pseudomonadota</taxon>
        <taxon>Betaproteobacteria</taxon>
        <taxon>Burkholderiales</taxon>
        <taxon>Comamonadaceae</taxon>
        <taxon>Rhodoferax</taxon>
    </lineage>
</organism>
<accession>Q21QP2</accession>
<name>RL15_ALBFT</name>
<gene>
    <name evidence="1" type="primary">rplO</name>
    <name type="ordered locus">Rfer_4224</name>
</gene>
<evidence type="ECO:0000255" key="1">
    <source>
        <dbReference type="HAMAP-Rule" id="MF_01341"/>
    </source>
</evidence>
<evidence type="ECO:0000256" key="2">
    <source>
        <dbReference type="SAM" id="MobiDB-lite"/>
    </source>
</evidence>
<evidence type="ECO:0000305" key="3"/>
<keyword id="KW-1185">Reference proteome</keyword>
<keyword id="KW-0687">Ribonucleoprotein</keyword>
<keyword id="KW-0689">Ribosomal protein</keyword>
<keyword id="KW-0694">RNA-binding</keyword>
<keyword id="KW-0699">rRNA-binding</keyword>
<comment type="function">
    <text evidence="1">Binds to the 23S rRNA.</text>
</comment>
<comment type="subunit">
    <text evidence="1">Part of the 50S ribosomal subunit.</text>
</comment>
<comment type="similarity">
    <text evidence="1">Belongs to the universal ribosomal protein uL15 family.</text>
</comment>
<proteinExistence type="inferred from homology"/>
<protein>
    <recommendedName>
        <fullName evidence="1">Large ribosomal subunit protein uL15</fullName>
    </recommendedName>
    <alternativeName>
        <fullName evidence="3">50S ribosomal protein L15</fullName>
    </alternativeName>
</protein>